<evidence type="ECO:0000255" key="1">
    <source>
        <dbReference type="HAMAP-Rule" id="MF_00206"/>
    </source>
</evidence>
<evidence type="ECO:0000255" key="2">
    <source>
        <dbReference type="PROSITE-ProRule" id="PRU01266"/>
    </source>
</evidence>
<feature type="chain" id="PRO_1000124634" description="Lipoyl synthase">
    <location>
        <begin position="1"/>
        <end position="320"/>
    </location>
</feature>
<feature type="domain" description="Radical SAM core" evidence="2">
    <location>
        <begin position="79"/>
        <end position="296"/>
    </location>
</feature>
<feature type="binding site" evidence="1">
    <location>
        <position position="67"/>
    </location>
    <ligand>
        <name>[4Fe-4S] cluster</name>
        <dbReference type="ChEBI" id="CHEBI:49883"/>
        <label>1</label>
    </ligand>
</feature>
<feature type="binding site" evidence="1">
    <location>
        <position position="72"/>
    </location>
    <ligand>
        <name>[4Fe-4S] cluster</name>
        <dbReference type="ChEBI" id="CHEBI:49883"/>
        <label>1</label>
    </ligand>
</feature>
<feature type="binding site" evidence="1">
    <location>
        <position position="78"/>
    </location>
    <ligand>
        <name>[4Fe-4S] cluster</name>
        <dbReference type="ChEBI" id="CHEBI:49883"/>
        <label>1</label>
    </ligand>
</feature>
<feature type="binding site" evidence="1">
    <location>
        <position position="93"/>
    </location>
    <ligand>
        <name>[4Fe-4S] cluster</name>
        <dbReference type="ChEBI" id="CHEBI:49883"/>
        <label>2</label>
        <note>4Fe-4S-S-AdoMet</note>
    </ligand>
</feature>
<feature type="binding site" evidence="1">
    <location>
        <position position="97"/>
    </location>
    <ligand>
        <name>[4Fe-4S] cluster</name>
        <dbReference type="ChEBI" id="CHEBI:49883"/>
        <label>2</label>
        <note>4Fe-4S-S-AdoMet</note>
    </ligand>
</feature>
<feature type="binding site" evidence="1">
    <location>
        <position position="100"/>
    </location>
    <ligand>
        <name>[4Fe-4S] cluster</name>
        <dbReference type="ChEBI" id="CHEBI:49883"/>
        <label>2</label>
        <note>4Fe-4S-S-AdoMet</note>
    </ligand>
</feature>
<feature type="binding site" evidence="1">
    <location>
        <position position="307"/>
    </location>
    <ligand>
        <name>[4Fe-4S] cluster</name>
        <dbReference type="ChEBI" id="CHEBI:49883"/>
        <label>1</label>
    </ligand>
</feature>
<gene>
    <name evidence="1" type="primary">lipA</name>
    <name type="ordered locus">HAPS_1235</name>
</gene>
<accession>B8F679</accession>
<name>LIPA_GLAP5</name>
<organism>
    <name type="scientific">Glaesserella parasuis serovar 5 (strain SH0165)</name>
    <name type="common">Haemophilus parasuis</name>
    <dbReference type="NCBI Taxonomy" id="557723"/>
    <lineage>
        <taxon>Bacteria</taxon>
        <taxon>Pseudomonadati</taxon>
        <taxon>Pseudomonadota</taxon>
        <taxon>Gammaproteobacteria</taxon>
        <taxon>Pasteurellales</taxon>
        <taxon>Pasteurellaceae</taxon>
        <taxon>Glaesserella</taxon>
    </lineage>
</organism>
<keyword id="KW-0004">4Fe-4S</keyword>
<keyword id="KW-0963">Cytoplasm</keyword>
<keyword id="KW-0408">Iron</keyword>
<keyword id="KW-0411">Iron-sulfur</keyword>
<keyword id="KW-0479">Metal-binding</keyword>
<keyword id="KW-1185">Reference proteome</keyword>
<keyword id="KW-0949">S-adenosyl-L-methionine</keyword>
<keyword id="KW-0808">Transferase</keyword>
<reference key="1">
    <citation type="journal article" date="2009" name="J. Bacteriol.">
        <title>Complete genome sequence of Haemophilus parasuis SH0165.</title>
        <authorList>
            <person name="Yue M."/>
            <person name="Yang F."/>
            <person name="Yang J."/>
            <person name="Bei W."/>
            <person name="Cai X."/>
            <person name="Chen L."/>
            <person name="Dong J."/>
            <person name="Zhou R."/>
            <person name="Jin M."/>
            <person name="Jin Q."/>
            <person name="Chen H."/>
        </authorList>
    </citation>
    <scope>NUCLEOTIDE SEQUENCE [LARGE SCALE GENOMIC DNA]</scope>
    <source>
        <strain>SH0165</strain>
    </source>
</reference>
<protein>
    <recommendedName>
        <fullName evidence="1">Lipoyl synthase</fullName>
        <ecNumber evidence="1">2.8.1.8</ecNumber>
    </recommendedName>
    <alternativeName>
        <fullName evidence="1">Lip-syn</fullName>
        <shortName evidence="1">LS</shortName>
    </alternativeName>
    <alternativeName>
        <fullName evidence="1">Lipoate synthase</fullName>
    </alternativeName>
    <alternativeName>
        <fullName evidence="1">Lipoic acid synthase</fullName>
    </alternativeName>
    <alternativeName>
        <fullName evidence="1">Sulfur insertion protein LipA</fullName>
    </alternativeName>
</protein>
<dbReference type="EC" id="2.8.1.8" evidence="1"/>
<dbReference type="EMBL" id="CP001321">
    <property type="protein sequence ID" value="ACL32831.1"/>
    <property type="molecule type" value="Genomic_DNA"/>
</dbReference>
<dbReference type="RefSeq" id="WP_005713775.1">
    <property type="nucleotide sequence ID" value="NC_011852.1"/>
</dbReference>
<dbReference type="SMR" id="B8F679"/>
<dbReference type="STRING" id="557723.HAPS_1235"/>
<dbReference type="GeneID" id="66618197"/>
<dbReference type="KEGG" id="hap:HAPS_1235"/>
<dbReference type="HOGENOM" id="CLU_033144_2_1_6"/>
<dbReference type="UniPathway" id="UPA00538">
    <property type="reaction ID" value="UER00593"/>
</dbReference>
<dbReference type="Proteomes" id="UP000006743">
    <property type="component" value="Chromosome"/>
</dbReference>
<dbReference type="GO" id="GO:0005737">
    <property type="term" value="C:cytoplasm"/>
    <property type="evidence" value="ECO:0007669"/>
    <property type="project" value="UniProtKB-SubCell"/>
</dbReference>
<dbReference type="GO" id="GO:0051539">
    <property type="term" value="F:4 iron, 4 sulfur cluster binding"/>
    <property type="evidence" value="ECO:0007669"/>
    <property type="project" value="UniProtKB-UniRule"/>
</dbReference>
<dbReference type="GO" id="GO:0016992">
    <property type="term" value="F:lipoate synthase activity"/>
    <property type="evidence" value="ECO:0007669"/>
    <property type="project" value="UniProtKB-UniRule"/>
</dbReference>
<dbReference type="GO" id="GO:0046872">
    <property type="term" value="F:metal ion binding"/>
    <property type="evidence" value="ECO:0007669"/>
    <property type="project" value="UniProtKB-KW"/>
</dbReference>
<dbReference type="CDD" id="cd01335">
    <property type="entry name" value="Radical_SAM"/>
    <property type="match status" value="1"/>
</dbReference>
<dbReference type="FunFam" id="3.20.20.70:FF:000023">
    <property type="entry name" value="Lipoyl synthase"/>
    <property type="match status" value="1"/>
</dbReference>
<dbReference type="Gene3D" id="3.20.20.70">
    <property type="entry name" value="Aldolase class I"/>
    <property type="match status" value="1"/>
</dbReference>
<dbReference type="HAMAP" id="MF_00206">
    <property type="entry name" value="Lipoyl_synth"/>
    <property type="match status" value="1"/>
</dbReference>
<dbReference type="InterPro" id="IPR013785">
    <property type="entry name" value="Aldolase_TIM"/>
</dbReference>
<dbReference type="InterPro" id="IPR006638">
    <property type="entry name" value="Elp3/MiaA/NifB-like_rSAM"/>
</dbReference>
<dbReference type="InterPro" id="IPR031691">
    <property type="entry name" value="LIAS_N"/>
</dbReference>
<dbReference type="InterPro" id="IPR003698">
    <property type="entry name" value="Lipoyl_synth"/>
</dbReference>
<dbReference type="InterPro" id="IPR007197">
    <property type="entry name" value="rSAM"/>
</dbReference>
<dbReference type="NCBIfam" id="TIGR00510">
    <property type="entry name" value="lipA"/>
    <property type="match status" value="1"/>
</dbReference>
<dbReference type="NCBIfam" id="NF004019">
    <property type="entry name" value="PRK05481.1"/>
    <property type="match status" value="1"/>
</dbReference>
<dbReference type="NCBIfam" id="NF009544">
    <property type="entry name" value="PRK12928.1"/>
    <property type="match status" value="1"/>
</dbReference>
<dbReference type="PANTHER" id="PTHR10949">
    <property type="entry name" value="LIPOYL SYNTHASE"/>
    <property type="match status" value="1"/>
</dbReference>
<dbReference type="PANTHER" id="PTHR10949:SF0">
    <property type="entry name" value="LIPOYL SYNTHASE, MITOCHONDRIAL"/>
    <property type="match status" value="1"/>
</dbReference>
<dbReference type="Pfam" id="PF16881">
    <property type="entry name" value="LIAS_N"/>
    <property type="match status" value="1"/>
</dbReference>
<dbReference type="Pfam" id="PF04055">
    <property type="entry name" value="Radical_SAM"/>
    <property type="match status" value="1"/>
</dbReference>
<dbReference type="PIRSF" id="PIRSF005963">
    <property type="entry name" value="Lipoyl_synth"/>
    <property type="match status" value="1"/>
</dbReference>
<dbReference type="SFLD" id="SFLDF00271">
    <property type="entry name" value="lipoyl_synthase"/>
    <property type="match status" value="1"/>
</dbReference>
<dbReference type="SFLD" id="SFLDG01058">
    <property type="entry name" value="lipoyl_synthase_like"/>
    <property type="match status" value="1"/>
</dbReference>
<dbReference type="SMART" id="SM00729">
    <property type="entry name" value="Elp3"/>
    <property type="match status" value="1"/>
</dbReference>
<dbReference type="SUPFAM" id="SSF102114">
    <property type="entry name" value="Radical SAM enzymes"/>
    <property type="match status" value="1"/>
</dbReference>
<dbReference type="PROSITE" id="PS51918">
    <property type="entry name" value="RADICAL_SAM"/>
    <property type="match status" value="1"/>
</dbReference>
<sequence length="320" mass="36193">MGTPFKMERGVKYRDAAKTSIIPVKNIDPNQELLKKPEWMKIKLPANSAKIESIKNGMRRHGLHSVCEEASCPNLHECFNHGTATFMIMGAICTRRCPFCDVAHGKPLPLDKDEPKKLAETIQDMKLKYVVITSVDRDDLPDRGAGHFAECVKEIRALNPGIKIEILVPDFRGRVEQAIEILKENPPDVFNHNLENVPRLYKEIRPGADYEWSLKLLKEFKAVFPDIPTKSGIMVGLGETNEEILQVMQDLRDHGVTMLTLGQYLQPSRHHLPVARYVHPTEFDMFREKANEMGFEHAACGPFVRSSYHADLQASGGLVK</sequence>
<proteinExistence type="inferred from homology"/>
<comment type="function">
    <text evidence="1">Catalyzes the radical-mediated insertion of two sulfur atoms into the C-6 and C-8 positions of the octanoyl moiety bound to the lipoyl domains of lipoate-dependent enzymes, thereby converting the octanoylated domains into lipoylated derivatives.</text>
</comment>
<comment type="catalytic activity">
    <reaction evidence="1">
        <text>[[Fe-S] cluster scaffold protein carrying a second [4Fe-4S](2+) cluster] + N(6)-octanoyl-L-lysyl-[protein] + 2 oxidized [2Fe-2S]-[ferredoxin] + 2 S-adenosyl-L-methionine + 4 H(+) = [[Fe-S] cluster scaffold protein] + N(6)-[(R)-dihydrolipoyl]-L-lysyl-[protein] + 4 Fe(3+) + 2 hydrogen sulfide + 2 5'-deoxyadenosine + 2 L-methionine + 2 reduced [2Fe-2S]-[ferredoxin]</text>
        <dbReference type="Rhea" id="RHEA:16585"/>
        <dbReference type="Rhea" id="RHEA-COMP:9928"/>
        <dbReference type="Rhea" id="RHEA-COMP:10000"/>
        <dbReference type="Rhea" id="RHEA-COMP:10001"/>
        <dbReference type="Rhea" id="RHEA-COMP:10475"/>
        <dbReference type="Rhea" id="RHEA-COMP:14568"/>
        <dbReference type="Rhea" id="RHEA-COMP:14569"/>
        <dbReference type="ChEBI" id="CHEBI:15378"/>
        <dbReference type="ChEBI" id="CHEBI:17319"/>
        <dbReference type="ChEBI" id="CHEBI:29034"/>
        <dbReference type="ChEBI" id="CHEBI:29919"/>
        <dbReference type="ChEBI" id="CHEBI:33722"/>
        <dbReference type="ChEBI" id="CHEBI:33737"/>
        <dbReference type="ChEBI" id="CHEBI:33738"/>
        <dbReference type="ChEBI" id="CHEBI:57844"/>
        <dbReference type="ChEBI" id="CHEBI:59789"/>
        <dbReference type="ChEBI" id="CHEBI:78809"/>
        <dbReference type="ChEBI" id="CHEBI:83100"/>
        <dbReference type="EC" id="2.8.1.8"/>
    </reaction>
</comment>
<comment type="cofactor">
    <cofactor evidence="1">
        <name>[4Fe-4S] cluster</name>
        <dbReference type="ChEBI" id="CHEBI:49883"/>
    </cofactor>
    <text evidence="1">Binds 2 [4Fe-4S] clusters per subunit. One cluster is coordinated with 3 cysteines and an exchangeable S-adenosyl-L-methionine.</text>
</comment>
<comment type="pathway">
    <text evidence="1">Protein modification; protein lipoylation via endogenous pathway; protein N(6)-(lipoyl)lysine from octanoyl-[acyl-carrier-protein]: step 2/2.</text>
</comment>
<comment type="subcellular location">
    <subcellularLocation>
        <location evidence="1">Cytoplasm</location>
    </subcellularLocation>
</comment>
<comment type="similarity">
    <text evidence="1">Belongs to the radical SAM superfamily. Lipoyl synthase family.</text>
</comment>